<proteinExistence type="inferred from homology"/>
<sequence>MASFRLALIQLQISSINSDNVTRACSFIREAATQGAKIVSLPECFNSPYGTKYFPEYAEKIPGESTQKLSEVAKECSIYLIGGSIPEEDAGKLYNTCAVFGPDGTLLAKYRKIHLFDIDVPGKITFQESKTLSPGDSFCTFDTYCRVGLGICYDMRFAELAQIYAQRGCQLLVYPGAFNLTTGPAHWELLQRGRAVDNQVYVATASPARDDKASYVAWGHSTVVNPWGEVLAKAGTEEAIVYSDIDLKKLAEIRQQIPVFRQKRSDLYAVEMKKP</sequence>
<evidence type="ECO:0000250" key="1">
    <source>
        <dbReference type="UniProtKB" id="Q9JHW2"/>
    </source>
</evidence>
<evidence type="ECO:0000250" key="2">
    <source>
        <dbReference type="UniProtKB" id="Q9NQR4"/>
    </source>
</evidence>
<evidence type="ECO:0000255" key="3">
    <source>
        <dbReference type="PROSITE-ProRule" id="PRU00054"/>
    </source>
</evidence>
<evidence type="ECO:0000305" key="4"/>
<reference key="1">
    <citation type="submission" date="2004-11" db="EMBL/GenBank/DDBJ databases">
        <authorList>
            <consortium name="The German cDNA consortium"/>
        </authorList>
    </citation>
    <scope>NUCLEOTIDE SEQUENCE [LARGE SCALE MRNA]</scope>
    <source>
        <tissue>Brain cortex</tissue>
    </source>
</reference>
<dbReference type="EC" id="3.5.1.3" evidence="2"/>
<dbReference type="EMBL" id="CR861230">
    <property type="protein sequence ID" value="CAH93300.1"/>
    <property type="molecule type" value="Transcribed_RNA"/>
</dbReference>
<dbReference type="SMR" id="Q5R4L6"/>
<dbReference type="FunCoup" id="Q5R4L6">
    <property type="interactions" value="1003"/>
</dbReference>
<dbReference type="STRING" id="9601.ENSPPYP00000015207"/>
<dbReference type="InParanoid" id="Q5R4L6"/>
<dbReference type="Proteomes" id="UP000001595">
    <property type="component" value="Unplaced"/>
</dbReference>
<dbReference type="GO" id="GO:0005739">
    <property type="term" value="C:mitochondrion"/>
    <property type="evidence" value="ECO:0007669"/>
    <property type="project" value="TreeGrafter"/>
</dbReference>
<dbReference type="GO" id="GO:0106008">
    <property type="term" value="F:2-oxoglutaramate amidase activity"/>
    <property type="evidence" value="ECO:0007669"/>
    <property type="project" value="RHEA"/>
</dbReference>
<dbReference type="GO" id="GO:0050152">
    <property type="term" value="F:omega-amidase activity"/>
    <property type="evidence" value="ECO:0007669"/>
    <property type="project" value="UniProtKB-EC"/>
</dbReference>
<dbReference type="GO" id="GO:0006528">
    <property type="term" value="P:asparagine metabolic process"/>
    <property type="evidence" value="ECO:0007669"/>
    <property type="project" value="TreeGrafter"/>
</dbReference>
<dbReference type="GO" id="GO:0006541">
    <property type="term" value="P:glutamine metabolic process"/>
    <property type="evidence" value="ECO:0007669"/>
    <property type="project" value="TreeGrafter"/>
</dbReference>
<dbReference type="GO" id="GO:0006107">
    <property type="term" value="P:oxaloacetate metabolic process"/>
    <property type="evidence" value="ECO:0007669"/>
    <property type="project" value="TreeGrafter"/>
</dbReference>
<dbReference type="CDD" id="cd07572">
    <property type="entry name" value="nit"/>
    <property type="match status" value="1"/>
</dbReference>
<dbReference type="FunFam" id="3.60.110.10:FF:000002">
    <property type="entry name" value="Nitrilase family member 2"/>
    <property type="match status" value="1"/>
</dbReference>
<dbReference type="Gene3D" id="3.60.110.10">
    <property type="entry name" value="Carbon-nitrogen hydrolase"/>
    <property type="match status" value="1"/>
</dbReference>
<dbReference type="InterPro" id="IPR003010">
    <property type="entry name" value="C-N_Hydrolase"/>
</dbReference>
<dbReference type="InterPro" id="IPR036526">
    <property type="entry name" value="C-N_Hydrolase_sf"/>
</dbReference>
<dbReference type="InterPro" id="IPR045254">
    <property type="entry name" value="Nit1/2_C-N_Hydrolase"/>
</dbReference>
<dbReference type="PANTHER" id="PTHR23088">
    <property type="entry name" value="NITRILASE-RELATED"/>
    <property type="match status" value="1"/>
</dbReference>
<dbReference type="PANTHER" id="PTHR23088:SF30">
    <property type="entry name" value="OMEGA-AMIDASE NIT2"/>
    <property type="match status" value="1"/>
</dbReference>
<dbReference type="Pfam" id="PF00795">
    <property type="entry name" value="CN_hydrolase"/>
    <property type="match status" value="1"/>
</dbReference>
<dbReference type="SUPFAM" id="SSF56317">
    <property type="entry name" value="Carbon-nitrogen hydrolase"/>
    <property type="match status" value="1"/>
</dbReference>
<dbReference type="PROSITE" id="PS50263">
    <property type="entry name" value="CN_HYDROLASE"/>
    <property type="match status" value="1"/>
</dbReference>
<comment type="function">
    <text evidence="2">Has omega-amidase activity. The role of omega-amidase is to remove potentially toxic intermediates by converting 2-oxoglutaramate and 2-oxosuccinamate to biologically useful 2-oxoglutarate and oxaloacetate, respectively.</text>
</comment>
<comment type="catalytic activity">
    <reaction evidence="2">
        <text>2-oxoglutaramate + H2O = 2-oxoglutarate + NH4(+)</text>
        <dbReference type="Rhea" id="RHEA:32963"/>
        <dbReference type="ChEBI" id="CHEBI:15377"/>
        <dbReference type="ChEBI" id="CHEBI:16769"/>
        <dbReference type="ChEBI" id="CHEBI:16810"/>
        <dbReference type="ChEBI" id="CHEBI:28938"/>
        <dbReference type="EC" id="3.5.1.3"/>
    </reaction>
    <physiologicalReaction direction="left-to-right" evidence="2">
        <dbReference type="Rhea" id="RHEA:32964"/>
    </physiologicalReaction>
</comment>
<comment type="catalytic activity">
    <reaction evidence="2">
        <text>2-oxosuccinamate + H2O = oxaloacetate + NH4(+)</text>
        <dbReference type="Rhea" id="RHEA:59412"/>
        <dbReference type="ChEBI" id="CHEBI:15377"/>
        <dbReference type="ChEBI" id="CHEBI:16452"/>
        <dbReference type="ChEBI" id="CHEBI:28938"/>
        <dbReference type="ChEBI" id="CHEBI:57735"/>
        <dbReference type="EC" id="3.5.1.3"/>
    </reaction>
    <physiologicalReaction direction="left-to-right" evidence="2">
        <dbReference type="Rhea" id="RHEA:59413"/>
    </physiologicalReaction>
</comment>
<comment type="subunit">
    <text evidence="2">Homodimer.</text>
</comment>
<comment type="subcellular location">
    <subcellularLocation>
        <location evidence="2">Cytoplasm</location>
    </subcellularLocation>
</comment>
<comment type="similarity">
    <text evidence="4">Belongs to the carbon-nitrogen hydrolase superfamily. NIT1/NIT2 family.</text>
</comment>
<organism>
    <name type="scientific">Pongo abelii</name>
    <name type="common">Sumatran orangutan</name>
    <name type="synonym">Pongo pygmaeus abelii</name>
    <dbReference type="NCBI Taxonomy" id="9601"/>
    <lineage>
        <taxon>Eukaryota</taxon>
        <taxon>Metazoa</taxon>
        <taxon>Chordata</taxon>
        <taxon>Craniata</taxon>
        <taxon>Vertebrata</taxon>
        <taxon>Euteleostomi</taxon>
        <taxon>Mammalia</taxon>
        <taxon>Eutheria</taxon>
        <taxon>Euarchontoglires</taxon>
        <taxon>Primates</taxon>
        <taxon>Haplorrhini</taxon>
        <taxon>Catarrhini</taxon>
        <taxon>Hominidae</taxon>
        <taxon>Pongo</taxon>
    </lineage>
</organism>
<accession>Q5R4L6</accession>
<feature type="chain" id="PRO_0000320255" description="Omega-amidase NIT2">
    <location>
        <begin position="1"/>
        <end position="275"/>
    </location>
</feature>
<feature type="domain" description="CN hydrolase" evidence="3">
    <location>
        <begin position="4"/>
        <end position="247"/>
    </location>
</feature>
<feature type="active site" description="Proton acceptor" evidence="3">
    <location>
        <position position="43"/>
    </location>
</feature>
<feature type="active site" description="Proton donor" evidence="3">
    <location>
        <position position="112"/>
    </location>
</feature>
<feature type="active site" description="Nucleophile" evidence="3">
    <location>
        <position position="152"/>
    </location>
</feature>
<feature type="modified residue" description="Phosphoserine" evidence="2">
    <location>
        <position position="26"/>
    </location>
</feature>
<feature type="modified residue" description="N6-acetyllysine; alternate" evidence="1">
    <location>
        <position position="68"/>
    </location>
</feature>
<feature type="modified residue" description="N6-succinyllysine; alternate" evidence="1">
    <location>
        <position position="68"/>
    </location>
</feature>
<feature type="modified residue" description="N6-succinyllysine" evidence="1">
    <location>
        <position position="123"/>
    </location>
</feature>
<feature type="modified residue" description="N6-succinyllysine" evidence="1">
    <location>
        <position position="130"/>
    </location>
</feature>
<name>NIT2_PONAB</name>
<protein>
    <recommendedName>
        <fullName>Omega-amidase NIT2</fullName>
        <ecNumber evidence="2">3.5.1.3</ecNumber>
    </recommendedName>
    <alternativeName>
        <fullName>Nitrilase homolog 2</fullName>
    </alternativeName>
</protein>
<gene>
    <name type="primary">NIT2</name>
</gene>
<keyword id="KW-0007">Acetylation</keyword>
<keyword id="KW-0963">Cytoplasm</keyword>
<keyword id="KW-0378">Hydrolase</keyword>
<keyword id="KW-0597">Phosphoprotein</keyword>
<keyword id="KW-1185">Reference proteome</keyword>